<keyword id="KW-0997">Cell inner membrane</keyword>
<keyword id="KW-1003">Cell membrane</keyword>
<keyword id="KW-0285">Flavoprotein</keyword>
<keyword id="KW-0288">FMN</keyword>
<keyword id="KW-0472">Membrane</keyword>
<keyword id="KW-0560">Oxidoreductase</keyword>
<comment type="function">
    <text evidence="1">Catalyzes the conversion of L-lactate to pyruvate. Is coupled to the respiratory chain.</text>
</comment>
<comment type="catalytic activity">
    <reaction evidence="1">
        <text>(S)-lactate + A = pyruvate + AH2</text>
        <dbReference type="Rhea" id="RHEA:45816"/>
        <dbReference type="ChEBI" id="CHEBI:13193"/>
        <dbReference type="ChEBI" id="CHEBI:15361"/>
        <dbReference type="ChEBI" id="CHEBI:16651"/>
        <dbReference type="ChEBI" id="CHEBI:17499"/>
    </reaction>
</comment>
<comment type="cofactor">
    <cofactor evidence="1">
        <name>FMN</name>
        <dbReference type="ChEBI" id="CHEBI:58210"/>
    </cofactor>
</comment>
<comment type="subcellular location">
    <subcellularLocation>
        <location evidence="1">Cell inner membrane</location>
        <topology evidence="1">Peripheral membrane protein</topology>
    </subcellularLocation>
</comment>
<comment type="similarity">
    <text evidence="1">Belongs to the FMN-dependent alpha-hydroxy acid dehydrogenase family.</text>
</comment>
<organism>
    <name type="scientific">Stenotrophomonas maltophilia (strain R551-3)</name>
    <dbReference type="NCBI Taxonomy" id="391008"/>
    <lineage>
        <taxon>Bacteria</taxon>
        <taxon>Pseudomonadati</taxon>
        <taxon>Pseudomonadota</taxon>
        <taxon>Gammaproteobacteria</taxon>
        <taxon>Lysobacterales</taxon>
        <taxon>Lysobacteraceae</taxon>
        <taxon>Stenotrophomonas</taxon>
        <taxon>Stenotrophomonas maltophilia group</taxon>
    </lineage>
</organism>
<evidence type="ECO:0000255" key="1">
    <source>
        <dbReference type="HAMAP-Rule" id="MF_01559"/>
    </source>
</evidence>
<dbReference type="EC" id="1.1.-.-" evidence="1"/>
<dbReference type="EMBL" id="CP001111">
    <property type="protein sequence ID" value="ACF52063.1"/>
    <property type="molecule type" value="Genomic_DNA"/>
</dbReference>
<dbReference type="RefSeq" id="WP_012511376.1">
    <property type="nucleotide sequence ID" value="NC_011071.1"/>
</dbReference>
<dbReference type="SMR" id="B4SMK1"/>
<dbReference type="STRING" id="391008.Smal_2360"/>
<dbReference type="KEGG" id="smt:Smal_2360"/>
<dbReference type="eggNOG" id="COG1304">
    <property type="taxonomic scope" value="Bacteria"/>
</dbReference>
<dbReference type="HOGENOM" id="CLU_020639_0_0_6"/>
<dbReference type="OrthoDB" id="9770452at2"/>
<dbReference type="Proteomes" id="UP000001867">
    <property type="component" value="Chromosome"/>
</dbReference>
<dbReference type="GO" id="GO:0005886">
    <property type="term" value="C:plasma membrane"/>
    <property type="evidence" value="ECO:0007669"/>
    <property type="project" value="UniProtKB-SubCell"/>
</dbReference>
<dbReference type="GO" id="GO:0010181">
    <property type="term" value="F:FMN binding"/>
    <property type="evidence" value="ECO:0007669"/>
    <property type="project" value="InterPro"/>
</dbReference>
<dbReference type="GO" id="GO:0004459">
    <property type="term" value="F:L-lactate dehydrogenase activity"/>
    <property type="evidence" value="ECO:0007669"/>
    <property type="project" value="UniProtKB-UniRule"/>
</dbReference>
<dbReference type="GO" id="GO:0009060">
    <property type="term" value="P:aerobic respiration"/>
    <property type="evidence" value="ECO:0007669"/>
    <property type="project" value="TreeGrafter"/>
</dbReference>
<dbReference type="GO" id="GO:0006089">
    <property type="term" value="P:lactate metabolic process"/>
    <property type="evidence" value="ECO:0007669"/>
    <property type="project" value="UniProtKB-UniRule"/>
</dbReference>
<dbReference type="CDD" id="cd02809">
    <property type="entry name" value="alpha_hydroxyacid_oxid_FMN"/>
    <property type="match status" value="1"/>
</dbReference>
<dbReference type="FunFam" id="3.20.20.70:FF:000029">
    <property type="entry name" value="L-lactate dehydrogenase"/>
    <property type="match status" value="1"/>
</dbReference>
<dbReference type="Gene3D" id="3.20.20.70">
    <property type="entry name" value="Aldolase class I"/>
    <property type="match status" value="1"/>
</dbReference>
<dbReference type="HAMAP" id="MF_01559">
    <property type="entry name" value="L_lact_dehydr"/>
    <property type="match status" value="1"/>
</dbReference>
<dbReference type="InterPro" id="IPR013785">
    <property type="entry name" value="Aldolase_TIM"/>
</dbReference>
<dbReference type="InterPro" id="IPR012133">
    <property type="entry name" value="Alpha-hydoxy_acid_DH_FMN"/>
</dbReference>
<dbReference type="InterPro" id="IPR000262">
    <property type="entry name" value="FMN-dep_DH"/>
</dbReference>
<dbReference type="InterPro" id="IPR037396">
    <property type="entry name" value="FMN_HAD"/>
</dbReference>
<dbReference type="InterPro" id="IPR008259">
    <property type="entry name" value="FMN_hydac_DH_AS"/>
</dbReference>
<dbReference type="InterPro" id="IPR020920">
    <property type="entry name" value="LldD"/>
</dbReference>
<dbReference type="NCBIfam" id="NF033901">
    <property type="entry name" value="L_lactate_LldD"/>
    <property type="match status" value="1"/>
</dbReference>
<dbReference type="NCBIfam" id="NF008398">
    <property type="entry name" value="PRK11197.1"/>
    <property type="match status" value="1"/>
</dbReference>
<dbReference type="PANTHER" id="PTHR10578:SF85">
    <property type="entry name" value="L-LACTATE DEHYDROGENASE"/>
    <property type="match status" value="1"/>
</dbReference>
<dbReference type="PANTHER" id="PTHR10578">
    <property type="entry name" value="S -2-HYDROXY-ACID OXIDASE-RELATED"/>
    <property type="match status" value="1"/>
</dbReference>
<dbReference type="Pfam" id="PF01070">
    <property type="entry name" value="FMN_dh"/>
    <property type="match status" value="1"/>
</dbReference>
<dbReference type="PIRSF" id="PIRSF000138">
    <property type="entry name" value="Al-hdrx_acd_dh"/>
    <property type="match status" value="1"/>
</dbReference>
<dbReference type="SUPFAM" id="SSF51395">
    <property type="entry name" value="FMN-linked oxidoreductases"/>
    <property type="match status" value="1"/>
</dbReference>
<dbReference type="PROSITE" id="PS00557">
    <property type="entry name" value="FMN_HYDROXY_ACID_DH_1"/>
    <property type="match status" value="1"/>
</dbReference>
<dbReference type="PROSITE" id="PS51349">
    <property type="entry name" value="FMN_HYDROXY_ACID_DH_2"/>
    <property type="match status" value="1"/>
</dbReference>
<sequence>MIISASTDYRAAAQRRLPPFLFHYIDGGAYAEHTLKRNVSDLSDIALRQRVLRNMSDLSLETELFGETLAMPVALAPVGLTGMYARRGEVQAARAADSRGIPFTLSTVSVCPIEEVAPAIQRPMWFQLYVLRDRGFMRNALERAQAAGVTTLVFTVDMPVPGARYRDAHSGMSGPNASLRRIGQAITHPHWAWDVGLFGRPHDLGNISTYRGNPTGLEDYIGWLGSNFDPSISWKDLEWIREFWKGPMVIKGILDPDDARDAVKFGADGIVVSNHGGRQLDGVLSTARALPAIADAVQGDLKILADSGIRTGLDVVRMLALGADTVLLGRAFVYALAAQGEAGVANLLDLIAKEMRVAMTLTGARRIADIGRDSLVNLP</sequence>
<proteinExistence type="inferred from homology"/>
<feature type="chain" id="PRO_0000383450" description="L-lactate dehydrogenase">
    <location>
        <begin position="1"/>
        <end position="379"/>
    </location>
</feature>
<feature type="domain" description="FMN hydroxy acid dehydrogenase" evidence="1">
    <location>
        <begin position="1"/>
        <end position="379"/>
    </location>
</feature>
<feature type="active site" description="Proton acceptor" evidence="1">
    <location>
        <position position="275"/>
    </location>
</feature>
<feature type="binding site" evidence="1">
    <location>
        <position position="24"/>
    </location>
    <ligand>
        <name>substrate</name>
    </ligand>
</feature>
<feature type="binding site" evidence="1">
    <location>
        <position position="106"/>
    </location>
    <ligand>
        <name>FMN</name>
        <dbReference type="ChEBI" id="CHEBI:58210"/>
    </ligand>
</feature>
<feature type="binding site" evidence="1">
    <location>
        <position position="127"/>
    </location>
    <ligand>
        <name>FMN</name>
        <dbReference type="ChEBI" id="CHEBI:58210"/>
    </ligand>
</feature>
<feature type="binding site" evidence="1">
    <location>
        <position position="129"/>
    </location>
    <ligand>
        <name>substrate</name>
    </ligand>
</feature>
<feature type="binding site" evidence="1">
    <location>
        <position position="155"/>
    </location>
    <ligand>
        <name>FMN</name>
        <dbReference type="ChEBI" id="CHEBI:58210"/>
    </ligand>
</feature>
<feature type="binding site" evidence="1">
    <location>
        <position position="164"/>
    </location>
    <ligand>
        <name>substrate</name>
    </ligand>
</feature>
<feature type="binding site" evidence="1">
    <location>
        <position position="251"/>
    </location>
    <ligand>
        <name>FMN</name>
        <dbReference type="ChEBI" id="CHEBI:58210"/>
    </ligand>
</feature>
<feature type="binding site" evidence="1">
    <location>
        <position position="278"/>
    </location>
    <ligand>
        <name>substrate</name>
    </ligand>
</feature>
<feature type="binding site" evidence="1">
    <location>
        <begin position="306"/>
        <end position="330"/>
    </location>
    <ligand>
        <name>FMN</name>
        <dbReference type="ChEBI" id="CHEBI:58210"/>
    </ligand>
</feature>
<reference key="1">
    <citation type="submission" date="2008-06" db="EMBL/GenBank/DDBJ databases">
        <title>Complete sequence of Stenotrophomonas maltophilia R551-3.</title>
        <authorList>
            <consortium name="US DOE Joint Genome Institute"/>
            <person name="Lucas S."/>
            <person name="Copeland A."/>
            <person name="Lapidus A."/>
            <person name="Glavina del Rio T."/>
            <person name="Dalin E."/>
            <person name="Tice H."/>
            <person name="Pitluck S."/>
            <person name="Chain P."/>
            <person name="Malfatti S."/>
            <person name="Shin M."/>
            <person name="Vergez L."/>
            <person name="Lang D."/>
            <person name="Schmutz J."/>
            <person name="Larimer F."/>
            <person name="Land M."/>
            <person name="Hauser L."/>
            <person name="Kyrpides N."/>
            <person name="Mikhailova N."/>
            <person name="Taghavi S."/>
            <person name="Monchy S."/>
            <person name="Newman L."/>
            <person name="Vangronsveld J."/>
            <person name="van der Lelie D."/>
            <person name="Richardson P."/>
        </authorList>
    </citation>
    <scope>NUCLEOTIDE SEQUENCE [LARGE SCALE GENOMIC DNA]</scope>
    <source>
        <strain>R551-3</strain>
    </source>
</reference>
<accession>B4SMK1</accession>
<protein>
    <recommendedName>
        <fullName evidence="1">L-lactate dehydrogenase</fullName>
        <ecNumber evidence="1">1.1.-.-</ecNumber>
    </recommendedName>
</protein>
<name>LLDD_STRM5</name>
<gene>
    <name evidence="1" type="primary">lldD</name>
    <name type="ordered locus">Smal_2360</name>
</gene>